<feature type="chain" id="PRO_0000118990" description="Structural maintenance of chromosomes protein 1A">
    <location>
        <begin position="1"/>
        <end position="1233"/>
    </location>
</feature>
<feature type="domain" description="SMC hinge">
    <location>
        <begin position="515"/>
        <end position="629"/>
    </location>
</feature>
<feature type="region of interest" description="Disordered" evidence="6">
    <location>
        <begin position="284"/>
        <end position="308"/>
    </location>
</feature>
<feature type="region of interest" description="Disordered" evidence="6">
    <location>
        <begin position="348"/>
        <end position="369"/>
    </location>
</feature>
<feature type="region of interest" description="Disordered" evidence="6">
    <location>
        <begin position="947"/>
        <end position="969"/>
    </location>
</feature>
<feature type="coiled-coil region" evidence="5">
    <location>
        <begin position="104"/>
        <end position="124"/>
    </location>
</feature>
<feature type="coiled-coil region" evidence="5">
    <location>
        <begin position="163"/>
        <end position="503"/>
    </location>
</feature>
<feature type="coiled-coil region" evidence="5">
    <location>
        <begin position="667"/>
        <end position="935"/>
    </location>
</feature>
<feature type="coiled-coil region" evidence="5">
    <location>
        <begin position="988"/>
        <end position="1068"/>
    </location>
</feature>
<feature type="compositionally biased region" description="Basic and acidic residues" evidence="6">
    <location>
        <begin position="284"/>
        <end position="293"/>
    </location>
</feature>
<feature type="compositionally biased region" description="Low complexity" evidence="6">
    <location>
        <begin position="953"/>
        <end position="967"/>
    </location>
</feature>
<feature type="binding site" evidence="5">
    <location>
        <begin position="32"/>
        <end position="39"/>
    </location>
    <ligand>
        <name>ATP</name>
        <dbReference type="ChEBI" id="CHEBI:30616"/>
    </ligand>
</feature>
<feature type="modified residue" description="Phosphoserine" evidence="3">
    <location>
        <position position="358"/>
    </location>
</feature>
<feature type="modified residue" description="Phosphoserine" evidence="3">
    <location>
        <position position="360"/>
    </location>
</feature>
<feature type="modified residue" description="N6-acetyllysine" evidence="3">
    <location>
        <position position="648"/>
    </location>
</feature>
<feature type="modified residue" description="N6-acetyllysine" evidence="3">
    <location>
        <position position="713"/>
    </location>
</feature>
<feature type="modified residue" description="Phosphoserine" evidence="3">
    <location>
        <position position="957"/>
    </location>
</feature>
<feature type="modified residue" description="Phosphoserine" evidence="3">
    <location>
        <position position="962"/>
    </location>
</feature>
<feature type="modified residue" description="Phosphoserine" evidence="3">
    <location>
        <position position="966"/>
    </location>
</feature>
<feature type="modified residue" description="Phosphoserine" evidence="3">
    <location>
        <position position="970"/>
    </location>
</feature>
<feature type="modified residue" description="N6-acetyllysine" evidence="11">
    <location>
        <position position="1037"/>
    </location>
</feature>
<feature type="sequence conflict" description="In Ref. 1; AAD27753." evidence="10" ref="1">
    <original>N</original>
    <variation>H</variation>
    <location>
        <position position="321"/>
    </location>
</feature>
<feature type="sequence conflict" description="In Ref. 1; AAD27753." evidence="10" ref="1">
    <original>E</original>
    <variation>G</variation>
    <location>
        <position position="679"/>
    </location>
</feature>
<feature type="sequence conflict" description="In Ref. 1; AAD27753." evidence="10" ref="1">
    <original>K</original>
    <variation>E</variation>
    <location>
        <position position="922"/>
    </location>
</feature>
<feature type="sequence conflict" description="In Ref. 1; AAD27753." evidence="10" ref="1">
    <original>K</original>
    <variation>E</variation>
    <location>
        <position position="944"/>
    </location>
</feature>
<feature type="sequence conflict" description="In Ref. 4; BAE43202." evidence="10" ref="4">
    <original>A</original>
    <variation>G</variation>
    <location>
        <position position="977"/>
    </location>
</feature>
<feature type="sequence conflict" description="In Ref. 1; AAD27753." evidence="10" ref="1">
    <original>Q</original>
    <variation>R</variation>
    <location>
        <position position="1013"/>
    </location>
</feature>
<feature type="helix" evidence="12">
    <location>
        <begin position="495"/>
        <end position="510"/>
    </location>
</feature>
<feature type="helix" evidence="12">
    <location>
        <begin position="512"/>
        <end position="514"/>
    </location>
</feature>
<feature type="strand" evidence="12">
    <location>
        <begin position="515"/>
        <end position="518"/>
    </location>
</feature>
<feature type="helix" evidence="12">
    <location>
        <begin position="519"/>
        <end position="521"/>
    </location>
</feature>
<feature type="strand" evidence="12">
    <location>
        <begin position="522"/>
        <end position="527"/>
    </location>
</feature>
<feature type="helix" evidence="12">
    <location>
        <begin position="528"/>
        <end position="530"/>
    </location>
</feature>
<feature type="helix" evidence="12">
    <location>
        <begin position="531"/>
        <end position="538"/>
    </location>
</feature>
<feature type="helix" evidence="12">
    <location>
        <begin position="539"/>
        <end position="543"/>
    </location>
</feature>
<feature type="strand" evidence="12">
    <location>
        <begin position="545"/>
        <end position="548"/>
    </location>
</feature>
<feature type="helix" evidence="12">
    <location>
        <begin position="550"/>
        <end position="563"/>
    </location>
</feature>
<feature type="strand" evidence="12">
    <location>
        <begin position="568"/>
        <end position="572"/>
    </location>
</feature>
<feature type="turn" evidence="12">
    <location>
        <begin position="573"/>
        <end position="575"/>
    </location>
</feature>
<feature type="helix" evidence="12">
    <location>
        <begin position="583"/>
        <end position="587"/>
    </location>
</feature>
<feature type="strand" evidence="12">
    <location>
        <begin position="591"/>
        <end position="593"/>
    </location>
</feature>
<feature type="helix" evidence="12">
    <location>
        <begin position="594"/>
        <end position="597"/>
    </location>
</feature>
<feature type="strand" evidence="12">
    <location>
        <begin position="598"/>
        <end position="602"/>
    </location>
</feature>
<feature type="helix" evidence="12">
    <location>
        <begin position="603"/>
        <end position="605"/>
    </location>
</feature>
<feature type="helix" evidence="12">
    <location>
        <begin position="606"/>
        <end position="613"/>
    </location>
</feature>
<feature type="strand" evidence="12">
    <location>
        <begin position="617"/>
        <end position="621"/>
    </location>
</feature>
<feature type="helix" evidence="12">
    <location>
        <begin position="622"/>
        <end position="630"/>
    </location>
</feature>
<feature type="strand" evidence="12">
    <location>
        <begin position="631"/>
        <end position="634"/>
    </location>
</feature>
<feature type="strand" evidence="12">
    <location>
        <begin position="638"/>
        <end position="640"/>
    </location>
</feature>
<feature type="strand" evidence="12">
    <location>
        <begin position="652"/>
        <end position="654"/>
    </location>
</feature>
<feature type="helix" evidence="12">
    <location>
        <begin position="656"/>
        <end position="662"/>
    </location>
</feature>
<feature type="helix" evidence="12">
    <location>
        <begin position="665"/>
        <end position="672"/>
    </location>
</feature>
<gene>
    <name type="primary">Smc1a</name>
    <name type="synonym">Sb1.8</name>
    <name type="synonym">Smc1</name>
    <name type="synonym">Smc1l1</name>
    <name type="synonym">Smcb</name>
</gene>
<protein>
    <recommendedName>
        <fullName>Structural maintenance of chromosomes protein 1A</fullName>
        <shortName>SMC protein 1A</shortName>
        <shortName>SMC-1-alpha</shortName>
        <shortName>SMC-1A</shortName>
    </recommendedName>
    <alternativeName>
        <fullName>Chromosome segregation protein SmcB</fullName>
    </alternativeName>
    <alternativeName>
        <fullName>Sb1.8</fullName>
    </alternativeName>
</protein>
<sequence>MGFLKLIEIENFKSYKGRQIIGPFQRFTAIIGPNGSGKSNLMDAISFVLGEKTSNLRVKTLRDLIHGAPVGKPAANRAFVSMVYSEEGAEDRTFARVIVGGSSEYKINNKVVQLHEYSEELEKLGILIKARNFLVFQGAVESIAMKNPKERTALFEEISRSGELAQEYDKRKKEMVKAEEDTQFNYHRKKNIAAERKEAKQEKEEADRYQRLKDEVVRAQVQLQLFKLYHNEVEIEKLNKELASKNKEIEKDKKRMDKVEDELKEKKKELGKMMREQQQIEKEIKEKDSELNQKRPQYIKAKENTSHKIKKLEAAKKSLQNAQKHYKKRKGDMDELEKEMLSVEKARQEFEERMEEESQSQGRDLTLEENQVKKYHRLKEEASKRAATLAQELEKFNRDQKADQDRLDLEERKKVETEAKIKQKLREIEENQKRIEKLEEYITTSKQSLEEQKKLEGELTEEVEMAKRRIDEINKELNQVMEQLGDARIDRQESSRQQRKAEIMESIKRLYPGSVYGRLIDLCQPTQKKYQIAVTKVLGKNMDAIIVDSEKTGRDCIQYIKEQRGEPETFLPLDYLEVKPTDEKLRELKGAKLVIDVIRYEPPHIKKALQYACGNALVCDNVEDARRIAFGGHQRHKTVALDGTLFQKSGVISGGASDLKAKARRWDEKAVDKLKEKKERLTEELKEQMKAKRKEAELRQVQSQAHGLQMRLKYSQSDLEQTKTRHLALNLQEKSKLESELANFGPRINDIKRIIQSREREMKDLKEKMNQVEDEVFEEFCREIGVRNIREFEEEKVKRQNEIAKKRLEFENQKTRLGIQLDFEKNQLKEDQDKVHMWEQTVKKDENEIEKLKKEEQRHMKIIDETMAQLQDLKNQHLAKKSEVNDKNHEMEEIRKKLGGANKEMTHLQKEVTAIETKLEQKRSDRHNLLQACKMQDIKLPLSKGTMDDISQEEGSSQGEESVSGSQRTSSIYAREALIEIDYGDLCEDLKDAQAEEEIKQEMNTLQQKLNEQQSVLQRIAAPNMKAMEKLESVRDKFQETSDEFEAARKRAKKAKQAFEQIKKERFDRFNACFESVATNIDEIYKALSRNSSAQAFLGPENPEEPYLDGINYNCVAPGKRFRPMDNLSGGEKTVAALALLFAIHSYKPAPFFVLDEIDAALDNTNIGKVANYIKEQSTCNFQAIVISLKEEFYTKAESLIGVYPEQGDCVISKVLTFDLTKYPDANPNPNEQ</sequence>
<evidence type="ECO:0000250" key="1"/>
<evidence type="ECO:0000250" key="2">
    <source>
        <dbReference type="UniProtKB" id="O97593"/>
    </source>
</evidence>
<evidence type="ECO:0000250" key="3">
    <source>
        <dbReference type="UniProtKB" id="Q14683"/>
    </source>
</evidence>
<evidence type="ECO:0000250" key="4">
    <source>
        <dbReference type="UniProtKB" id="Q9Z1M9"/>
    </source>
</evidence>
<evidence type="ECO:0000255" key="5"/>
<evidence type="ECO:0000256" key="6">
    <source>
        <dbReference type="SAM" id="MobiDB-lite"/>
    </source>
</evidence>
<evidence type="ECO:0000269" key="7">
    <source>
    </source>
</evidence>
<evidence type="ECO:0000269" key="8">
    <source>
    </source>
</evidence>
<evidence type="ECO:0000269" key="9">
    <source>
    </source>
</evidence>
<evidence type="ECO:0000305" key="10"/>
<evidence type="ECO:0007744" key="11">
    <source>
    </source>
</evidence>
<evidence type="ECO:0007829" key="12">
    <source>
        <dbReference type="PDB" id="7DG5"/>
    </source>
</evidence>
<dbReference type="EMBL" id="AF047600">
    <property type="protein sequence ID" value="AAD27753.1"/>
    <property type="molecule type" value="mRNA"/>
</dbReference>
<dbReference type="EMBL" id="AL672180">
    <property type="status" value="NOT_ANNOTATED_CDS"/>
    <property type="molecule type" value="Genomic_DNA"/>
</dbReference>
<dbReference type="EMBL" id="BC131667">
    <property type="protein sequence ID" value="AAI31668.1"/>
    <property type="molecule type" value="mRNA"/>
</dbReference>
<dbReference type="EMBL" id="AK007334">
    <property type="protein sequence ID" value="BAE43202.1"/>
    <property type="molecule type" value="mRNA"/>
</dbReference>
<dbReference type="EMBL" id="AK013648">
    <property type="protein sequence ID" value="BAB28937.1"/>
    <property type="molecule type" value="mRNA"/>
</dbReference>
<dbReference type="EMBL" id="AK017948">
    <property type="protein sequence ID" value="BAB31016.3"/>
    <property type="molecule type" value="mRNA"/>
</dbReference>
<dbReference type="EMBL" id="AK088183">
    <property type="protein sequence ID" value="BAC40193.1"/>
    <property type="molecule type" value="mRNA"/>
</dbReference>
<dbReference type="CCDS" id="CCDS30473.1"/>
<dbReference type="RefSeq" id="NP_062684.2">
    <property type="nucleotide sequence ID" value="NM_019710.2"/>
</dbReference>
<dbReference type="PDB" id="2WD5">
    <property type="method" value="X-ray"/>
    <property type="resolution" value="2.70 A"/>
    <property type="chains" value="A=461-685"/>
</dbReference>
<dbReference type="PDB" id="7DG5">
    <property type="method" value="X-ray"/>
    <property type="resolution" value="2.00 A"/>
    <property type="chains" value="A/C=471-685"/>
</dbReference>
<dbReference type="PDBsum" id="2WD5"/>
<dbReference type="PDBsum" id="7DG5"/>
<dbReference type="SMR" id="Q9CU62"/>
<dbReference type="BioGRID" id="204874">
    <property type="interactions" value="51"/>
</dbReference>
<dbReference type="CORUM" id="Q9CU62"/>
<dbReference type="DIP" id="DIP-57021N"/>
<dbReference type="FunCoup" id="Q9CU62">
    <property type="interactions" value="3852"/>
</dbReference>
<dbReference type="IntAct" id="Q9CU62">
    <property type="interactions" value="40"/>
</dbReference>
<dbReference type="MINT" id="Q9CU62"/>
<dbReference type="STRING" id="10090.ENSMUSP00000044645"/>
<dbReference type="GlyGen" id="Q9CU62">
    <property type="glycosylation" value="1 site, 1 O-linked glycan (1 site)"/>
</dbReference>
<dbReference type="iPTMnet" id="Q9CU62"/>
<dbReference type="PhosphoSitePlus" id="Q9CU62"/>
<dbReference type="SwissPalm" id="Q9CU62"/>
<dbReference type="PaxDb" id="10090-ENSMUSP00000044645"/>
<dbReference type="PeptideAtlas" id="Q9CU62"/>
<dbReference type="ProteomicsDB" id="257203"/>
<dbReference type="Pumba" id="Q9CU62"/>
<dbReference type="Antibodypedia" id="491">
    <property type="antibodies" value="1040 antibodies from 44 providers"/>
</dbReference>
<dbReference type="DNASU" id="24061"/>
<dbReference type="Ensembl" id="ENSMUST00000045312.6">
    <property type="protein sequence ID" value="ENSMUSP00000044645.6"/>
    <property type="gene ID" value="ENSMUSG00000041133.12"/>
</dbReference>
<dbReference type="GeneID" id="24061"/>
<dbReference type="KEGG" id="mmu:24061"/>
<dbReference type="UCSC" id="uc009upx.2">
    <property type="organism name" value="mouse"/>
</dbReference>
<dbReference type="AGR" id="MGI:1344345"/>
<dbReference type="CTD" id="8243"/>
<dbReference type="MGI" id="MGI:1344345">
    <property type="gene designation" value="Smc1a"/>
</dbReference>
<dbReference type="VEuPathDB" id="HostDB:ENSMUSG00000041133"/>
<dbReference type="eggNOG" id="KOG0018">
    <property type="taxonomic scope" value="Eukaryota"/>
</dbReference>
<dbReference type="GeneTree" id="ENSGT00940000155614"/>
<dbReference type="HOGENOM" id="CLU_001042_0_2_1"/>
<dbReference type="InParanoid" id="Q9CU62"/>
<dbReference type="OMA" id="KHMDFQR"/>
<dbReference type="OrthoDB" id="413649at2759"/>
<dbReference type="PhylomeDB" id="Q9CU62"/>
<dbReference type="TreeFam" id="TF101156"/>
<dbReference type="Reactome" id="R-MMU-2467813">
    <property type="pathway name" value="Separation of Sister Chromatids"/>
</dbReference>
<dbReference type="Reactome" id="R-MMU-2468052">
    <property type="pathway name" value="Establishment of Sister Chromatid Cohesion"/>
</dbReference>
<dbReference type="Reactome" id="R-MMU-2470946">
    <property type="pathway name" value="Cohesin Loading onto Chromatin"/>
</dbReference>
<dbReference type="Reactome" id="R-MMU-2500257">
    <property type="pathway name" value="Resolution of Sister Chromatid Cohesion"/>
</dbReference>
<dbReference type="Reactome" id="R-MMU-3108214">
    <property type="pathway name" value="SUMOylation of DNA damage response and repair proteins"/>
</dbReference>
<dbReference type="BioGRID-ORCS" id="24061">
    <property type="hits" value="31 hits in 121 CRISPR screens"/>
</dbReference>
<dbReference type="CD-CODE" id="CE726F99">
    <property type="entry name" value="Postsynaptic density"/>
</dbReference>
<dbReference type="ChiTaRS" id="Smc1a">
    <property type="organism name" value="mouse"/>
</dbReference>
<dbReference type="EvolutionaryTrace" id="Q9CU62"/>
<dbReference type="PRO" id="PR:Q9CU62"/>
<dbReference type="Proteomes" id="UP000000589">
    <property type="component" value="Chromosome X"/>
</dbReference>
<dbReference type="RNAct" id="Q9CU62">
    <property type="molecule type" value="protein"/>
</dbReference>
<dbReference type="Bgee" id="ENSMUSG00000041133">
    <property type="expression patterns" value="Expressed in undifferentiated genital tubercle and 266 other cell types or tissues"/>
</dbReference>
<dbReference type="ExpressionAtlas" id="Q9CU62">
    <property type="expression patterns" value="baseline and differential"/>
</dbReference>
<dbReference type="GO" id="GO:0008278">
    <property type="term" value="C:cohesin complex"/>
    <property type="evidence" value="ECO:0000314"/>
    <property type="project" value="CAFA"/>
</dbReference>
<dbReference type="GO" id="GO:0005829">
    <property type="term" value="C:cytosol"/>
    <property type="evidence" value="ECO:0007669"/>
    <property type="project" value="Ensembl"/>
</dbReference>
<dbReference type="GO" id="GO:0000776">
    <property type="term" value="C:kinetochore"/>
    <property type="evidence" value="ECO:0000250"/>
    <property type="project" value="UniProtKB"/>
</dbReference>
<dbReference type="GO" id="GO:0030893">
    <property type="term" value="C:meiotic cohesin complex"/>
    <property type="evidence" value="ECO:0000314"/>
    <property type="project" value="UniProtKB"/>
</dbReference>
<dbReference type="GO" id="GO:0030892">
    <property type="term" value="C:mitotic cohesin complex"/>
    <property type="evidence" value="ECO:0007669"/>
    <property type="project" value="Ensembl"/>
</dbReference>
<dbReference type="GO" id="GO:0097431">
    <property type="term" value="C:mitotic spindle pole"/>
    <property type="evidence" value="ECO:0007669"/>
    <property type="project" value="Ensembl"/>
</dbReference>
<dbReference type="GO" id="GO:0016363">
    <property type="term" value="C:nuclear matrix"/>
    <property type="evidence" value="ECO:0007669"/>
    <property type="project" value="Ensembl"/>
</dbReference>
<dbReference type="GO" id="GO:0005654">
    <property type="term" value="C:nucleoplasm"/>
    <property type="evidence" value="ECO:0000304"/>
    <property type="project" value="Reactome"/>
</dbReference>
<dbReference type="GO" id="GO:0005634">
    <property type="term" value="C:nucleus"/>
    <property type="evidence" value="ECO:0000314"/>
    <property type="project" value="CAFA"/>
</dbReference>
<dbReference type="GO" id="GO:0005524">
    <property type="term" value="F:ATP binding"/>
    <property type="evidence" value="ECO:0007669"/>
    <property type="project" value="UniProtKB-KW"/>
</dbReference>
<dbReference type="GO" id="GO:0016887">
    <property type="term" value="F:ATP hydrolysis activity"/>
    <property type="evidence" value="ECO:0007669"/>
    <property type="project" value="InterPro"/>
</dbReference>
<dbReference type="GO" id="GO:0003682">
    <property type="term" value="F:chromatin binding"/>
    <property type="evidence" value="ECO:0000314"/>
    <property type="project" value="MGI"/>
</dbReference>
<dbReference type="GO" id="GO:0036033">
    <property type="term" value="F:mediator complex binding"/>
    <property type="evidence" value="ECO:0000314"/>
    <property type="project" value="MGI"/>
</dbReference>
<dbReference type="GO" id="GO:0046982">
    <property type="term" value="F:protein heterodimerization activity"/>
    <property type="evidence" value="ECO:0007669"/>
    <property type="project" value="Ensembl"/>
</dbReference>
<dbReference type="GO" id="GO:0051301">
    <property type="term" value="P:cell division"/>
    <property type="evidence" value="ECO:0007669"/>
    <property type="project" value="UniProtKB-KW"/>
</dbReference>
<dbReference type="GO" id="GO:0006281">
    <property type="term" value="P:DNA repair"/>
    <property type="evidence" value="ECO:0007669"/>
    <property type="project" value="UniProtKB-KW"/>
</dbReference>
<dbReference type="GO" id="GO:0051321">
    <property type="term" value="P:meiotic cell cycle"/>
    <property type="evidence" value="ECO:0000353"/>
    <property type="project" value="MGI"/>
</dbReference>
<dbReference type="GO" id="GO:0090307">
    <property type="term" value="P:mitotic spindle assembly"/>
    <property type="evidence" value="ECO:0007669"/>
    <property type="project" value="Ensembl"/>
</dbReference>
<dbReference type="GO" id="GO:0072423">
    <property type="term" value="P:response to DNA damage checkpoint signaling"/>
    <property type="evidence" value="ECO:0000250"/>
    <property type="project" value="UniProtKB"/>
</dbReference>
<dbReference type="GO" id="GO:0009314">
    <property type="term" value="P:response to radiation"/>
    <property type="evidence" value="ECO:0000250"/>
    <property type="project" value="UniProtKB"/>
</dbReference>
<dbReference type="GO" id="GO:0007062">
    <property type="term" value="P:sister chromatid cohesion"/>
    <property type="evidence" value="ECO:0007669"/>
    <property type="project" value="Ensembl"/>
</dbReference>
<dbReference type="GO" id="GO:0035019">
    <property type="term" value="P:somatic stem cell population maintenance"/>
    <property type="evidence" value="ECO:0000315"/>
    <property type="project" value="MGI"/>
</dbReference>
<dbReference type="CDD" id="cd03275">
    <property type="entry name" value="ABC_SMC1_euk"/>
    <property type="match status" value="2"/>
</dbReference>
<dbReference type="FunFam" id="1.20.1060.20:FF:000001">
    <property type="entry name" value="Structural maintenance of chromosomes 1A"/>
    <property type="match status" value="1"/>
</dbReference>
<dbReference type="FunFam" id="3.40.50.300:FF:000564">
    <property type="entry name" value="Structural maintenance of chromosomes 1A"/>
    <property type="match status" value="1"/>
</dbReference>
<dbReference type="FunFam" id="3.30.70.1620:FF:000001">
    <property type="entry name" value="Structural maintenance of chromosomes 1B"/>
    <property type="match status" value="1"/>
</dbReference>
<dbReference type="FunFam" id="3.40.50.300:FF:000562">
    <property type="entry name" value="Structural maintenance of chromosomes protein"/>
    <property type="match status" value="1"/>
</dbReference>
<dbReference type="Gene3D" id="1.20.1060.20">
    <property type="match status" value="1"/>
</dbReference>
<dbReference type="Gene3D" id="3.30.70.1620">
    <property type="match status" value="1"/>
</dbReference>
<dbReference type="Gene3D" id="3.40.50.300">
    <property type="entry name" value="P-loop containing nucleotide triphosphate hydrolases"/>
    <property type="match status" value="2"/>
</dbReference>
<dbReference type="InterPro" id="IPR027417">
    <property type="entry name" value="P-loop_NTPase"/>
</dbReference>
<dbReference type="InterPro" id="IPR003395">
    <property type="entry name" value="RecF/RecN/SMC_N"/>
</dbReference>
<dbReference type="InterPro" id="IPR024704">
    <property type="entry name" value="SMC"/>
</dbReference>
<dbReference type="InterPro" id="IPR028468">
    <property type="entry name" value="Smc1_ABC"/>
</dbReference>
<dbReference type="InterPro" id="IPR010935">
    <property type="entry name" value="SMC_hinge"/>
</dbReference>
<dbReference type="InterPro" id="IPR036277">
    <property type="entry name" value="SMC_hinge_sf"/>
</dbReference>
<dbReference type="PANTHER" id="PTHR18937:SF170">
    <property type="entry name" value="STRUCTURAL MAINTENANCE OF CHROMOSOMES PROTEIN 1A"/>
    <property type="match status" value="1"/>
</dbReference>
<dbReference type="PANTHER" id="PTHR18937">
    <property type="entry name" value="STRUCTURAL MAINTENANCE OF CHROMOSOMES SMC FAMILY MEMBER"/>
    <property type="match status" value="1"/>
</dbReference>
<dbReference type="Pfam" id="PF06470">
    <property type="entry name" value="SMC_hinge"/>
    <property type="match status" value="1"/>
</dbReference>
<dbReference type="Pfam" id="PF02463">
    <property type="entry name" value="SMC_N"/>
    <property type="match status" value="1"/>
</dbReference>
<dbReference type="PIRSF" id="PIRSF005719">
    <property type="entry name" value="SMC"/>
    <property type="match status" value="1"/>
</dbReference>
<dbReference type="SMART" id="SM00968">
    <property type="entry name" value="SMC_hinge"/>
    <property type="match status" value="1"/>
</dbReference>
<dbReference type="SUPFAM" id="SSF52540">
    <property type="entry name" value="P-loop containing nucleoside triphosphate hydrolases"/>
    <property type="match status" value="1"/>
</dbReference>
<dbReference type="SUPFAM" id="SSF75553">
    <property type="entry name" value="Smc hinge domain"/>
    <property type="match status" value="1"/>
</dbReference>
<organism>
    <name type="scientific">Mus musculus</name>
    <name type="common">Mouse</name>
    <dbReference type="NCBI Taxonomy" id="10090"/>
    <lineage>
        <taxon>Eukaryota</taxon>
        <taxon>Metazoa</taxon>
        <taxon>Chordata</taxon>
        <taxon>Craniata</taxon>
        <taxon>Vertebrata</taxon>
        <taxon>Euteleostomi</taxon>
        <taxon>Mammalia</taxon>
        <taxon>Eutheria</taxon>
        <taxon>Euarchontoglires</taxon>
        <taxon>Glires</taxon>
        <taxon>Rodentia</taxon>
        <taxon>Myomorpha</taxon>
        <taxon>Muroidea</taxon>
        <taxon>Muridae</taxon>
        <taxon>Murinae</taxon>
        <taxon>Mus</taxon>
        <taxon>Mus</taxon>
    </lineage>
</organism>
<proteinExistence type="evidence at protein level"/>
<accession>Q9CU62</accession>
<accession>A2AFQ5</accession>
<accession>Q3V480</accession>
<accession>Q9CUX9</accession>
<accession>Q9D959</accession>
<accession>Q9WTU1</accession>
<keyword id="KW-0002">3D-structure</keyword>
<keyword id="KW-0007">Acetylation</keyword>
<keyword id="KW-0067">ATP-binding</keyword>
<keyword id="KW-0131">Cell cycle</keyword>
<keyword id="KW-0132">Cell division</keyword>
<keyword id="KW-0137">Centromere</keyword>
<keyword id="KW-0158">Chromosome</keyword>
<keyword id="KW-0175">Coiled coil</keyword>
<keyword id="KW-0227">DNA damage</keyword>
<keyword id="KW-0234">DNA repair</keyword>
<keyword id="KW-0469">Meiosis</keyword>
<keyword id="KW-0498">Mitosis</keyword>
<keyword id="KW-0547">Nucleotide-binding</keyword>
<keyword id="KW-0539">Nucleus</keyword>
<keyword id="KW-0597">Phosphoprotein</keyword>
<keyword id="KW-1185">Reference proteome</keyword>
<keyword id="KW-0832">Ubl conjugation</keyword>
<comment type="function">
    <text evidence="1">Involved in chromosome cohesion during cell cycle and in DNA repair. Involved in DNA repair via its interaction with BRCA1 and its related phosphorylation by ATM, and works as a downstream effector in the ATM/NBS1 branch of S-phase checkpoint (By similarity). Central component of cohesin complex. The cohesin complex is required for the cohesion of sister chromatids after DNA replication. The cohesin complex apparently forms a large proteinaceous ring within which sister chromatids can be trapped. At anaphase, the complex is cleaved and dissociates from chromatin, allowing sister chromatids to segregate. The cohesin complex may also play a role in spindle pole assembly during mitosis. Involved in DNA repair via its interaction with BRCA1 and its related phosphorylation by ATM, or via its phosphorylation by ATR. Works as a downstream effector both in the ATM/NBS1 branch and in the ATR/MSH2 branch of S-phase checkpoint.</text>
</comment>
<comment type="subunit">
    <text evidence="2 3 4 7 8">Forms a heterodimer with SMC3 in cohesin complexes. Cohesin complexes are composed of the SMC1 (SMC1A or SMC1B) and SMC3 heterodimer attached via their SMC hinge domain, RAD21 which link them, and one STAG protein (STAG1, STAG2 or STAG3), which interacts with RAD21. In germ cell cohesin complexes, SMC1A is mutually exclusive with SMC1B (PubMed:10375619). Interacts with STAG3 (PubMed:11483963). Found in a complex with CDCA5, SMC3 and RAD21, PDS5A/SCC-112 and PDS5B/APRIN. Found in a complex containing POLE and SMC3. Interacts with BRCA1, SYCP2, NDC80, RPGR and BRAT1. The cohesin complex interacts with the cohesin loading complex subunits NIPBL/Scc2 (via HEAT repeats) and MAU2/Scc4. NIPBL directly contacts all members of the complex, RAD21, SMC1A/B, SMC3 and STAG1 (By similarity).</text>
</comment>
<comment type="interaction">
    <interactant intactId="EBI-2550016">
        <id>Q9CU62</id>
    </interactant>
    <interactant intactId="EBI-2657527">
        <id>Q61687</id>
        <label>Atrx</label>
    </interactant>
    <organismsDiffer>false</organismsDiffer>
    <experiments>4</experiments>
</comment>
<comment type="interaction">
    <interactant intactId="EBI-2550016">
        <id>Q9CU62</id>
    </interactant>
    <interactant intactId="EBI-1811999">
        <id>Q6A078</id>
        <label>Cep290</label>
    </interactant>
    <organismsDiffer>false</organismsDiffer>
    <experiments>2</experiments>
</comment>
<comment type="interaction">
    <interactant intactId="EBI-2550016">
        <id>Q9CU62</id>
    </interactant>
    <interactant intactId="EBI-1188816">
        <id>Q9Z2D6</id>
        <label>Mecp2</label>
    </interactant>
    <organismsDiffer>false</organismsDiffer>
    <experiments>3</experiments>
</comment>
<comment type="subcellular location">
    <subcellularLocation>
        <location>Nucleus</location>
    </subcellularLocation>
    <subcellularLocation>
        <location>Chromosome</location>
    </subcellularLocation>
    <subcellularLocation>
        <location>Chromosome</location>
        <location>Centromere</location>
    </subcellularLocation>
    <text evidence="1">Associates with chromatin. The phosphorylated form on Ser-957 and Ser-966 associates with chromatin during G1/S/G2 phases but not during M phase, suggesting that phosphorylation does not regulate cohesin function (By similarity). Before prophase it is scattered along chromosome arms. During prophase, most of cohesin complexes dissociate from chromatin probably because of phosphorylation by PLK, except at centromeres, where cohesin complexes remain. At anaphase, the RAD21 subunit of the cohesin complex is cleaved, leading to the dissociation of the complex from chromosomes, allowing chromosome separation. In germ cells, cohesin complex dissociates from chromatin at prophase I, and may be replaced by a meiosis-specific cohesin complex.</text>
</comment>
<comment type="tissue specificity">
    <text evidence="9">Ubiquitous (at protein level).</text>
</comment>
<comment type="domain">
    <text evidence="1">The flexible SMC hinge domain, which separates the large intramolecular coiled coil regions, allows the heterotypic interaction with the corresponding domain of SMC3, forming a V-shaped heterodimer. The two heads of the heterodimer are then connected by different ends of the cleavable RAD21 protein, forming a ring structure (By similarity).</text>
</comment>
<comment type="PTM">
    <text evidence="3">Phosphorylated upon ionizing radiation or DNA methylation. Phosphorylation of Ser-957 and Ser-966 activates it and is required for S-phase checkpoint activation (By similarity).</text>
</comment>
<comment type="PTM">
    <text evidence="3">Ubiquitinated by the DCX(DCAF15) complex, leading to its degradation.</text>
</comment>
<comment type="similarity">
    <text evidence="10">Belongs to the SMC family. SMC1 subfamily.</text>
</comment>
<reference key="1">
    <citation type="journal article" date="1999" name="Gene">
        <title>Characterization of the components of the putative mammalian sister chromatid cohesion complex.</title>
        <authorList>
            <person name="Darwiche N."/>
            <person name="Freeman L.A."/>
            <person name="Strunnikov A."/>
        </authorList>
    </citation>
    <scope>NUCLEOTIDE SEQUENCE [MRNA]</scope>
    <scope>CHARACTERIZATION</scope>
    <scope>IDENTIFICATION IN A COHESIN COMPLEX WITH SMC3 AND RAD21</scope>
    <source>
        <tissue>Embryo</tissue>
    </source>
</reference>
<reference key="2">
    <citation type="journal article" date="2009" name="PLoS Biol.">
        <title>Lineage-specific biology revealed by a finished genome assembly of the mouse.</title>
        <authorList>
            <person name="Church D.M."/>
            <person name="Goodstadt L."/>
            <person name="Hillier L.W."/>
            <person name="Zody M.C."/>
            <person name="Goldstein S."/>
            <person name="She X."/>
            <person name="Bult C.J."/>
            <person name="Agarwala R."/>
            <person name="Cherry J.L."/>
            <person name="DiCuccio M."/>
            <person name="Hlavina W."/>
            <person name="Kapustin Y."/>
            <person name="Meric P."/>
            <person name="Maglott D."/>
            <person name="Birtle Z."/>
            <person name="Marques A.C."/>
            <person name="Graves T."/>
            <person name="Zhou S."/>
            <person name="Teague B."/>
            <person name="Potamousis K."/>
            <person name="Churas C."/>
            <person name="Place M."/>
            <person name="Herschleb J."/>
            <person name="Runnheim R."/>
            <person name="Forrest D."/>
            <person name="Amos-Landgraf J."/>
            <person name="Schwartz D.C."/>
            <person name="Cheng Z."/>
            <person name="Lindblad-Toh K."/>
            <person name="Eichler E.E."/>
            <person name="Ponting C.P."/>
        </authorList>
    </citation>
    <scope>NUCLEOTIDE SEQUENCE [LARGE SCALE GENOMIC DNA]</scope>
    <source>
        <strain>C57BL/6J</strain>
    </source>
</reference>
<reference key="3">
    <citation type="journal article" date="2004" name="Genome Res.">
        <title>The status, quality, and expansion of the NIH full-length cDNA project: the Mammalian Gene Collection (MGC).</title>
        <authorList>
            <consortium name="The MGC Project Team"/>
        </authorList>
    </citation>
    <scope>NUCLEOTIDE SEQUENCE [LARGE SCALE MRNA]</scope>
</reference>
<reference key="4">
    <citation type="journal article" date="2005" name="Science">
        <title>The transcriptional landscape of the mammalian genome.</title>
        <authorList>
            <person name="Carninci P."/>
            <person name="Kasukawa T."/>
            <person name="Katayama S."/>
            <person name="Gough J."/>
            <person name="Frith M.C."/>
            <person name="Maeda N."/>
            <person name="Oyama R."/>
            <person name="Ravasi T."/>
            <person name="Lenhard B."/>
            <person name="Wells C."/>
            <person name="Kodzius R."/>
            <person name="Shimokawa K."/>
            <person name="Bajic V.B."/>
            <person name="Brenner S.E."/>
            <person name="Batalov S."/>
            <person name="Forrest A.R."/>
            <person name="Zavolan M."/>
            <person name="Davis M.J."/>
            <person name="Wilming L.G."/>
            <person name="Aidinis V."/>
            <person name="Allen J.E."/>
            <person name="Ambesi-Impiombato A."/>
            <person name="Apweiler R."/>
            <person name="Aturaliya R.N."/>
            <person name="Bailey T.L."/>
            <person name="Bansal M."/>
            <person name="Baxter L."/>
            <person name="Beisel K.W."/>
            <person name="Bersano T."/>
            <person name="Bono H."/>
            <person name="Chalk A.M."/>
            <person name="Chiu K.P."/>
            <person name="Choudhary V."/>
            <person name="Christoffels A."/>
            <person name="Clutterbuck D.R."/>
            <person name="Crowe M.L."/>
            <person name="Dalla E."/>
            <person name="Dalrymple B.P."/>
            <person name="de Bono B."/>
            <person name="Della Gatta G."/>
            <person name="di Bernardo D."/>
            <person name="Down T."/>
            <person name="Engstrom P."/>
            <person name="Fagiolini M."/>
            <person name="Faulkner G."/>
            <person name="Fletcher C.F."/>
            <person name="Fukushima T."/>
            <person name="Furuno M."/>
            <person name="Futaki S."/>
            <person name="Gariboldi M."/>
            <person name="Georgii-Hemming P."/>
            <person name="Gingeras T.R."/>
            <person name="Gojobori T."/>
            <person name="Green R.E."/>
            <person name="Gustincich S."/>
            <person name="Harbers M."/>
            <person name="Hayashi Y."/>
            <person name="Hensch T.K."/>
            <person name="Hirokawa N."/>
            <person name="Hill D."/>
            <person name="Huminiecki L."/>
            <person name="Iacono M."/>
            <person name="Ikeo K."/>
            <person name="Iwama A."/>
            <person name="Ishikawa T."/>
            <person name="Jakt M."/>
            <person name="Kanapin A."/>
            <person name="Katoh M."/>
            <person name="Kawasawa Y."/>
            <person name="Kelso J."/>
            <person name="Kitamura H."/>
            <person name="Kitano H."/>
            <person name="Kollias G."/>
            <person name="Krishnan S.P."/>
            <person name="Kruger A."/>
            <person name="Kummerfeld S.K."/>
            <person name="Kurochkin I.V."/>
            <person name="Lareau L.F."/>
            <person name="Lazarevic D."/>
            <person name="Lipovich L."/>
            <person name="Liu J."/>
            <person name="Liuni S."/>
            <person name="McWilliam S."/>
            <person name="Madan Babu M."/>
            <person name="Madera M."/>
            <person name="Marchionni L."/>
            <person name="Matsuda H."/>
            <person name="Matsuzawa S."/>
            <person name="Miki H."/>
            <person name="Mignone F."/>
            <person name="Miyake S."/>
            <person name="Morris K."/>
            <person name="Mottagui-Tabar S."/>
            <person name="Mulder N."/>
            <person name="Nakano N."/>
            <person name="Nakauchi H."/>
            <person name="Ng P."/>
            <person name="Nilsson R."/>
            <person name="Nishiguchi S."/>
            <person name="Nishikawa S."/>
            <person name="Nori F."/>
            <person name="Ohara O."/>
            <person name="Okazaki Y."/>
            <person name="Orlando V."/>
            <person name="Pang K.C."/>
            <person name="Pavan W.J."/>
            <person name="Pavesi G."/>
            <person name="Pesole G."/>
            <person name="Petrovsky N."/>
            <person name="Piazza S."/>
            <person name="Reed J."/>
            <person name="Reid J.F."/>
            <person name="Ring B.Z."/>
            <person name="Ringwald M."/>
            <person name="Rost B."/>
            <person name="Ruan Y."/>
            <person name="Salzberg S.L."/>
            <person name="Sandelin A."/>
            <person name="Schneider C."/>
            <person name="Schoenbach C."/>
            <person name="Sekiguchi K."/>
            <person name="Semple C.A."/>
            <person name="Seno S."/>
            <person name="Sessa L."/>
            <person name="Sheng Y."/>
            <person name="Shibata Y."/>
            <person name="Shimada H."/>
            <person name="Shimada K."/>
            <person name="Silva D."/>
            <person name="Sinclair B."/>
            <person name="Sperling S."/>
            <person name="Stupka E."/>
            <person name="Sugiura K."/>
            <person name="Sultana R."/>
            <person name="Takenaka Y."/>
            <person name="Taki K."/>
            <person name="Tammoja K."/>
            <person name="Tan S.L."/>
            <person name="Tang S."/>
            <person name="Taylor M.S."/>
            <person name="Tegner J."/>
            <person name="Teichmann S.A."/>
            <person name="Ueda H.R."/>
            <person name="van Nimwegen E."/>
            <person name="Verardo R."/>
            <person name="Wei C.L."/>
            <person name="Yagi K."/>
            <person name="Yamanishi H."/>
            <person name="Zabarovsky E."/>
            <person name="Zhu S."/>
            <person name="Zimmer A."/>
            <person name="Hide W."/>
            <person name="Bult C."/>
            <person name="Grimmond S.M."/>
            <person name="Teasdale R.D."/>
            <person name="Liu E.T."/>
            <person name="Brusic V."/>
            <person name="Quackenbush J."/>
            <person name="Wahlestedt C."/>
            <person name="Mattick J.S."/>
            <person name="Hume D.A."/>
            <person name="Kai C."/>
            <person name="Sasaki D."/>
            <person name="Tomaru Y."/>
            <person name="Fukuda S."/>
            <person name="Kanamori-Katayama M."/>
            <person name="Suzuki M."/>
            <person name="Aoki J."/>
            <person name="Arakawa T."/>
            <person name="Iida J."/>
            <person name="Imamura K."/>
            <person name="Itoh M."/>
            <person name="Kato T."/>
            <person name="Kawaji H."/>
            <person name="Kawagashira N."/>
            <person name="Kawashima T."/>
            <person name="Kojima M."/>
            <person name="Kondo S."/>
            <person name="Konno H."/>
            <person name="Nakano K."/>
            <person name="Ninomiya N."/>
            <person name="Nishio T."/>
            <person name="Okada M."/>
            <person name="Plessy C."/>
            <person name="Shibata K."/>
            <person name="Shiraki T."/>
            <person name="Suzuki S."/>
            <person name="Tagami M."/>
            <person name="Waki K."/>
            <person name="Watahiki A."/>
            <person name="Okamura-Oho Y."/>
            <person name="Suzuki H."/>
            <person name="Kawai J."/>
            <person name="Hayashizaki Y."/>
        </authorList>
    </citation>
    <scope>NUCLEOTIDE SEQUENCE [LARGE SCALE MRNA] OF 1-301 AND 977-1233</scope>
    <source>
        <strain>C57BL/6J</strain>
        <strain>NOD</strain>
        <tissue>Hippocampus</tissue>
        <tissue>Pancreas</tissue>
        <tissue>Thymus</tissue>
    </source>
</reference>
<reference key="5">
    <citation type="journal article" date="2001" name="Nat. Cell Biol.">
        <title>Mammalian STAG3 is a cohesin specific to sister chromatid arms in meiosis I.</title>
        <authorList>
            <person name="Prieto I."/>
            <person name="Suja J.A."/>
            <person name="Pezzi N."/>
            <person name="Kremer L."/>
            <person name="Martinez-A C."/>
            <person name="Rufas J.S."/>
            <person name="Barbero J.L."/>
        </authorList>
    </citation>
    <scope>INTERACTION WITH STAG3</scope>
</reference>
<reference key="6">
    <citation type="journal article" date="2010" name="Cell">
        <title>A tissue-specific atlas of mouse protein phosphorylation and expression.</title>
        <authorList>
            <person name="Huttlin E.L."/>
            <person name="Jedrychowski M.P."/>
            <person name="Elias J.E."/>
            <person name="Goswami T."/>
            <person name="Rad R."/>
            <person name="Beausoleil S.A."/>
            <person name="Villen J."/>
            <person name="Haas W."/>
            <person name="Sowa M.E."/>
            <person name="Gygi S.P."/>
        </authorList>
    </citation>
    <scope>IDENTIFICATION BY MASS SPECTROMETRY [LARGE SCALE ANALYSIS]</scope>
    <source>
        <tissue>Brain</tissue>
        <tissue>Brown adipose tissue</tissue>
        <tissue>Heart</tissue>
        <tissue>Kidney</tissue>
        <tissue>Liver</tissue>
        <tissue>Lung</tissue>
        <tissue>Pancreas</tissue>
        <tissue>Spleen</tissue>
    </source>
</reference>
<reference key="7">
    <citation type="journal article" date="2011" name="Exp. Ther. Med.">
        <title>Functional interaction of BRCA1/ATM-associated BAAT1 with the DNA-PK catalytic subunit.</title>
        <authorList>
            <person name="So E.Y."/>
            <person name="Ouchi T."/>
        </authorList>
    </citation>
    <scope>TISSUE SPECIFICITY</scope>
</reference>
<reference key="8">
    <citation type="journal article" date="2013" name="Mol. Cell">
        <title>SIRT5-mediated lysine desuccinylation impacts diverse metabolic pathways.</title>
        <authorList>
            <person name="Park J."/>
            <person name="Chen Y."/>
            <person name="Tishkoff D.X."/>
            <person name="Peng C."/>
            <person name="Tan M."/>
            <person name="Dai L."/>
            <person name="Xie Z."/>
            <person name="Zhang Y."/>
            <person name="Zwaans B.M."/>
            <person name="Skinner M.E."/>
            <person name="Lombard D.B."/>
            <person name="Zhao Y."/>
        </authorList>
    </citation>
    <scope>ACETYLATION [LARGE SCALE ANALYSIS] AT LYS-1037</scope>
    <scope>IDENTIFICATION BY MASS SPECTROMETRY [LARGE SCALE ANALYSIS]</scope>
    <source>
        <tissue>Embryonic fibroblast</tissue>
    </source>
</reference>
<name>SMC1A_MOUSE</name>